<gene>
    <name type="primary">MST1L</name>
    <name type="synonym">D1F15S1A</name>
    <name type="synonym">MST1P9</name>
    <name type="synonym">MSTP9</name>
</gene>
<evidence type="ECO:0000250" key="1"/>
<evidence type="ECO:0000255" key="2"/>
<evidence type="ECO:0000255" key="3">
    <source>
        <dbReference type="PROSITE-ProRule" id="PRU00121"/>
    </source>
</evidence>
<evidence type="ECO:0000255" key="4">
    <source>
        <dbReference type="PROSITE-ProRule" id="PRU00274"/>
    </source>
</evidence>
<evidence type="ECO:0000255" key="5">
    <source>
        <dbReference type="PROSITE-ProRule" id="PRU00315"/>
    </source>
</evidence>
<evidence type="ECO:0000303" key="6">
    <source ref="1"/>
</evidence>
<evidence type="ECO:0000305" key="7"/>
<organism>
    <name type="scientific">Homo sapiens</name>
    <name type="common">Human</name>
    <dbReference type="NCBI Taxonomy" id="9606"/>
    <lineage>
        <taxon>Eukaryota</taxon>
        <taxon>Metazoa</taxon>
        <taxon>Chordata</taxon>
        <taxon>Craniata</taxon>
        <taxon>Vertebrata</taxon>
        <taxon>Euteleostomi</taxon>
        <taxon>Mammalia</taxon>
        <taxon>Eutheria</taxon>
        <taxon>Euarchontoglires</taxon>
        <taxon>Primates</taxon>
        <taxon>Haplorrhini</taxon>
        <taxon>Catarrhini</taxon>
        <taxon>Hominidae</taxon>
        <taxon>Homo</taxon>
    </lineage>
</organism>
<reference key="1">
    <citation type="submission" date="2002-12" db="EMBL/GenBank/DDBJ databases">
        <authorList>
            <person name="Heese K."/>
        </authorList>
    </citation>
    <scope>NUCLEOTIDE SEQUENCE [MRNA] (ISOFORM 2)</scope>
    <source>
        <tissue>Brain</tissue>
    </source>
</reference>
<reference key="2">
    <citation type="journal article" date="2006" name="Nature">
        <title>The DNA sequence and biological annotation of human chromosome 1.</title>
        <authorList>
            <person name="Gregory S.G."/>
            <person name="Barlow K.F."/>
            <person name="McLay K.E."/>
            <person name="Kaul R."/>
            <person name="Swarbreck D."/>
            <person name="Dunham A."/>
            <person name="Scott C.E."/>
            <person name="Howe K.L."/>
            <person name="Woodfine K."/>
            <person name="Spencer C.C.A."/>
            <person name="Jones M.C."/>
            <person name="Gillson C."/>
            <person name="Searle S."/>
            <person name="Zhou Y."/>
            <person name="Kokocinski F."/>
            <person name="McDonald L."/>
            <person name="Evans R."/>
            <person name="Phillips K."/>
            <person name="Atkinson A."/>
            <person name="Cooper R."/>
            <person name="Jones C."/>
            <person name="Hall R.E."/>
            <person name="Andrews T.D."/>
            <person name="Lloyd C."/>
            <person name="Ainscough R."/>
            <person name="Almeida J.P."/>
            <person name="Ambrose K.D."/>
            <person name="Anderson F."/>
            <person name="Andrew R.W."/>
            <person name="Ashwell R.I.S."/>
            <person name="Aubin K."/>
            <person name="Babbage A.K."/>
            <person name="Bagguley C.L."/>
            <person name="Bailey J."/>
            <person name="Beasley H."/>
            <person name="Bethel G."/>
            <person name="Bird C.P."/>
            <person name="Bray-Allen S."/>
            <person name="Brown J.Y."/>
            <person name="Brown A.J."/>
            <person name="Buckley D."/>
            <person name="Burton J."/>
            <person name="Bye J."/>
            <person name="Carder C."/>
            <person name="Chapman J.C."/>
            <person name="Clark S.Y."/>
            <person name="Clarke G."/>
            <person name="Clee C."/>
            <person name="Cobley V."/>
            <person name="Collier R.E."/>
            <person name="Corby N."/>
            <person name="Coville G.J."/>
            <person name="Davies J."/>
            <person name="Deadman R."/>
            <person name="Dunn M."/>
            <person name="Earthrowl M."/>
            <person name="Ellington A.G."/>
            <person name="Errington H."/>
            <person name="Frankish A."/>
            <person name="Frankland J."/>
            <person name="French L."/>
            <person name="Garner P."/>
            <person name="Garnett J."/>
            <person name="Gay L."/>
            <person name="Ghori M.R.J."/>
            <person name="Gibson R."/>
            <person name="Gilby L.M."/>
            <person name="Gillett W."/>
            <person name="Glithero R.J."/>
            <person name="Grafham D.V."/>
            <person name="Griffiths C."/>
            <person name="Griffiths-Jones S."/>
            <person name="Grocock R."/>
            <person name="Hammond S."/>
            <person name="Harrison E.S.I."/>
            <person name="Hart E."/>
            <person name="Haugen E."/>
            <person name="Heath P.D."/>
            <person name="Holmes S."/>
            <person name="Holt K."/>
            <person name="Howden P.J."/>
            <person name="Hunt A.R."/>
            <person name="Hunt S.E."/>
            <person name="Hunter G."/>
            <person name="Isherwood J."/>
            <person name="James R."/>
            <person name="Johnson C."/>
            <person name="Johnson D."/>
            <person name="Joy A."/>
            <person name="Kay M."/>
            <person name="Kershaw J.K."/>
            <person name="Kibukawa M."/>
            <person name="Kimberley A.M."/>
            <person name="King A."/>
            <person name="Knights A.J."/>
            <person name="Lad H."/>
            <person name="Laird G."/>
            <person name="Lawlor S."/>
            <person name="Leongamornlert D.A."/>
            <person name="Lloyd D.M."/>
            <person name="Loveland J."/>
            <person name="Lovell J."/>
            <person name="Lush M.J."/>
            <person name="Lyne R."/>
            <person name="Martin S."/>
            <person name="Mashreghi-Mohammadi M."/>
            <person name="Matthews L."/>
            <person name="Matthews N.S.W."/>
            <person name="McLaren S."/>
            <person name="Milne S."/>
            <person name="Mistry S."/>
            <person name="Moore M.J.F."/>
            <person name="Nickerson T."/>
            <person name="O'Dell C.N."/>
            <person name="Oliver K."/>
            <person name="Palmeiri A."/>
            <person name="Palmer S.A."/>
            <person name="Parker A."/>
            <person name="Patel D."/>
            <person name="Pearce A.V."/>
            <person name="Peck A.I."/>
            <person name="Pelan S."/>
            <person name="Phelps K."/>
            <person name="Phillimore B.J."/>
            <person name="Plumb R."/>
            <person name="Rajan J."/>
            <person name="Raymond C."/>
            <person name="Rouse G."/>
            <person name="Saenphimmachak C."/>
            <person name="Sehra H.K."/>
            <person name="Sheridan E."/>
            <person name="Shownkeen R."/>
            <person name="Sims S."/>
            <person name="Skuce C.D."/>
            <person name="Smith M."/>
            <person name="Steward C."/>
            <person name="Subramanian S."/>
            <person name="Sycamore N."/>
            <person name="Tracey A."/>
            <person name="Tromans A."/>
            <person name="Van Helmond Z."/>
            <person name="Wall M."/>
            <person name="Wallis J.M."/>
            <person name="White S."/>
            <person name="Whitehead S.L."/>
            <person name="Wilkinson J.E."/>
            <person name="Willey D.L."/>
            <person name="Williams H."/>
            <person name="Wilming L."/>
            <person name="Wray P.W."/>
            <person name="Wu Z."/>
            <person name="Coulson A."/>
            <person name="Vaudin M."/>
            <person name="Sulston J.E."/>
            <person name="Durbin R.M."/>
            <person name="Hubbard T."/>
            <person name="Wooster R."/>
            <person name="Dunham I."/>
            <person name="Carter N.P."/>
            <person name="McVean G."/>
            <person name="Ross M.T."/>
            <person name="Harrow J."/>
            <person name="Olson M.V."/>
            <person name="Beck S."/>
            <person name="Rogers J."/>
            <person name="Bentley D.R."/>
        </authorList>
    </citation>
    <scope>NUCLEOTIDE SEQUENCE [LARGE SCALE GENOMIC DNA]</scope>
</reference>
<reference key="3">
    <citation type="journal article" date="1998" name="DNA Seq.">
        <title>Structure of the human D1F15S1A locus: a chromosome 1 locus with 97 percent identity to the chromosome 3 gene coding for hepatocyte growth factor-like protein.</title>
        <authorList>
            <person name="Degen S.J."/>
            <person name="McDowell S.A."/>
            <person name="Waltz S.E."/>
            <person name="Gould F."/>
            <person name="Stuart L.A."/>
            <person name="Carritt B."/>
        </authorList>
    </citation>
    <scope>NUCLEOTIDE SEQUENCE [MRNA] OF 442-715 (ISOFORM 1)</scope>
    <source>
        <tissue>Liver</tissue>
    </source>
</reference>
<protein>
    <recommendedName>
        <fullName>Putative macrophage stimulating 1-like protein</fullName>
    </recommendedName>
    <alternativeName>
        <fullName>Brain rescue factor 1</fullName>
        <shortName>BRF-1</shortName>
    </alternativeName>
    <alternativeName>
        <fullName>Hepatocyte growth factor-like protein homolog</fullName>
    </alternativeName>
</protein>
<dbReference type="EMBL" id="AY192149">
    <property type="protein sequence ID" value="AAP20103.1"/>
    <property type="molecule type" value="mRNA"/>
</dbReference>
<dbReference type="EMBL" id="AL021920">
    <property type="status" value="NOT_ANNOTATED_CDS"/>
    <property type="molecule type" value="Genomic_DNA"/>
</dbReference>
<dbReference type="EMBL" id="U28055">
    <property type="protein sequence ID" value="AAC35412.1"/>
    <property type="status" value="ALT_SEQ"/>
    <property type="molecule type" value="mRNA"/>
</dbReference>
<dbReference type="RefSeq" id="NP_001258662.1">
    <property type="nucleotide sequence ID" value="NM_001271733.1"/>
</dbReference>
<dbReference type="SMR" id="Q2TV78"/>
<dbReference type="BioGRID" id="116391">
    <property type="interactions" value="2"/>
</dbReference>
<dbReference type="FunCoup" id="Q2TV78">
    <property type="interactions" value="190"/>
</dbReference>
<dbReference type="IntAct" id="Q2TV78">
    <property type="interactions" value="1"/>
</dbReference>
<dbReference type="MEROPS" id="S01.933"/>
<dbReference type="MEROPS" id="S01.975"/>
<dbReference type="iPTMnet" id="Q2TV78"/>
<dbReference type="PhosphoSitePlus" id="Q2TV78"/>
<dbReference type="BioMuta" id="HGNC:7390"/>
<dbReference type="DMDM" id="205829211"/>
<dbReference type="jPOST" id="Q2TV78"/>
<dbReference type="MassIVE" id="Q2TV78"/>
<dbReference type="PeptideAtlas" id="Q2TV78"/>
<dbReference type="ProteomicsDB" id="61501">
    <molecule id="Q2TV78-1"/>
</dbReference>
<dbReference type="ProteomicsDB" id="61502">
    <molecule id="Q2TV78-2"/>
</dbReference>
<dbReference type="DNASU" id="11223"/>
<dbReference type="AGR" id="HGNC:7390"/>
<dbReference type="GeneCards" id="MST1L"/>
<dbReference type="HGNC" id="HGNC:7390">
    <property type="gene designation" value="MST1L"/>
</dbReference>
<dbReference type="neXtProt" id="NX_Q2TV78"/>
<dbReference type="InParanoid" id="Q2TV78"/>
<dbReference type="PAN-GO" id="Q2TV78">
    <property type="GO annotations" value="3 GO annotations based on evolutionary models"/>
</dbReference>
<dbReference type="PhylomeDB" id="Q2TV78"/>
<dbReference type="TreeFam" id="TF329901"/>
<dbReference type="PathwayCommons" id="Q2TV78"/>
<dbReference type="SignaLink" id="Q2TV78"/>
<dbReference type="BioGRID-ORCS" id="11223">
    <property type="hits" value="11 hits in 230 CRISPR screens"/>
</dbReference>
<dbReference type="ChiTaRS" id="MST1L">
    <property type="organism name" value="human"/>
</dbReference>
<dbReference type="GenomeRNAi" id="11223"/>
<dbReference type="Pharos" id="Q2TV78">
    <property type="development level" value="Tdark"/>
</dbReference>
<dbReference type="PRO" id="PR:Q2TV78"/>
<dbReference type="Proteomes" id="UP000005640">
    <property type="component" value="Unplaced"/>
</dbReference>
<dbReference type="RNAct" id="Q2TV78">
    <property type="molecule type" value="protein"/>
</dbReference>
<dbReference type="GO" id="GO:0005615">
    <property type="term" value="C:extracellular space"/>
    <property type="evidence" value="ECO:0000318"/>
    <property type="project" value="GO_Central"/>
</dbReference>
<dbReference type="GO" id="GO:0008233">
    <property type="term" value="F:peptidase activity"/>
    <property type="evidence" value="ECO:0007669"/>
    <property type="project" value="UniProtKB-KW"/>
</dbReference>
<dbReference type="GO" id="GO:0030971">
    <property type="term" value="F:receptor tyrosine kinase binding"/>
    <property type="evidence" value="ECO:0000318"/>
    <property type="project" value="GO_Central"/>
</dbReference>
<dbReference type="GO" id="GO:0006508">
    <property type="term" value="P:proteolysis"/>
    <property type="evidence" value="ECO:0007669"/>
    <property type="project" value="UniProtKB-KW"/>
</dbReference>
<dbReference type="GO" id="GO:0046425">
    <property type="term" value="P:regulation of receptor signaling pathway via JAK-STAT"/>
    <property type="evidence" value="ECO:0000318"/>
    <property type="project" value="GO_Central"/>
</dbReference>
<dbReference type="CDD" id="cd00108">
    <property type="entry name" value="KR"/>
    <property type="match status" value="2"/>
</dbReference>
<dbReference type="CDD" id="cd01099">
    <property type="entry name" value="PAN_AP_HGF"/>
    <property type="match status" value="1"/>
</dbReference>
<dbReference type="CDD" id="cd00190">
    <property type="entry name" value="Tryp_SPc"/>
    <property type="match status" value="1"/>
</dbReference>
<dbReference type="FunFam" id="2.40.20.10:FF:000004">
    <property type="entry name" value="Hepatocyte growth factor"/>
    <property type="match status" value="1"/>
</dbReference>
<dbReference type="FunFam" id="2.40.10.10:FF:000055">
    <property type="entry name" value="Hepatocyte growth factor-like 1"/>
    <property type="match status" value="1"/>
</dbReference>
<dbReference type="FunFam" id="2.40.10.10:FF:000064">
    <property type="entry name" value="Hepatocyte growth factor-like protein"/>
    <property type="match status" value="1"/>
</dbReference>
<dbReference type="Gene3D" id="2.40.20.10">
    <property type="entry name" value="Plasminogen Kringle 4"/>
    <property type="match status" value="4"/>
</dbReference>
<dbReference type="Gene3D" id="2.40.10.10">
    <property type="entry name" value="Trypsin-like serine proteases"/>
    <property type="match status" value="2"/>
</dbReference>
<dbReference type="InterPro" id="IPR024174">
    <property type="entry name" value="HGF/MST1"/>
</dbReference>
<dbReference type="InterPro" id="IPR000001">
    <property type="entry name" value="Kringle"/>
</dbReference>
<dbReference type="InterPro" id="IPR013806">
    <property type="entry name" value="Kringle-like"/>
</dbReference>
<dbReference type="InterPro" id="IPR018056">
    <property type="entry name" value="Kringle_CS"/>
</dbReference>
<dbReference type="InterPro" id="IPR038178">
    <property type="entry name" value="Kringle_sf"/>
</dbReference>
<dbReference type="InterPro" id="IPR003609">
    <property type="entry name" value="Pan_app"/>
</dbReference>
<dbReference type="InterPro" id="IPR009003">
    <property type="entry name" value="Peptidase_S1_PA"/>
</dbReference>
<dbReference type="InterPro" id="IPR043504">
    <property type="entry name" value="Peptidase_S1_PA_chymotrypsin"/>
</dbReference>
<dbReference type="InterPro" id="IPR001314">
    <property type="entry name" value="Peptidase_S1A"/>
</dbReference>
<dbReference type="InterPro" id="IPR050759">
    <property type="entry name" value="Serine_protease_kringle"/>
</dbReference>
<dbReference type="InterPro" id="IPR001254">
    <property type="entry name" value="Trypsin_dom"/>
</dbReference>
<dbReference type="PANTHER" id="PTHR24261:SF7">
    <property type="entry name" value="KRINGLE DOMAIN-CONTAINING PROTEIN"/>
    <property type="match status" value="1"/>
</dbReference>
<dbReference type="PANTHER" id="PTHR24261">
    <property type="entry name" value="PLASMINOGEN-RELATED"/>
    <property type="match status" value="1"/>
</dbReference>
<dbReference type="Pfam" id="PF00051">
    <property type="entry name" value="Kringle"/>
    <property type="match status" value="3"/>
</dbReference>
<dbReference type="Pfam" id="PF00024">
    <property type="entry name" value="PAN_1"/>
    <property type="match status" value="1"/>
</dbReference>
<dbReference type="Pfam" id="PF00089">
    <property type="entry name" value="Trypsin"/>
    <property type="match status" value="1"/>
</dbReference>
<dbReference type="PIRSF" id="PIRSF001152">
    <property type="entry name" value="HGF_MST1"/>
    <property type="match status" value="1"/>
</dbReference>
<dbReference type="PRINTS" id="PR00722">
    <property type="entry name" value="CHYMOTRYPSIN"/>
</dbReference>
<dbReference type="PRINTS" id="PR00018">
    <property type="entry name" value="KRINGLE"/>
</dbReference>
<dbReference type="SMART" id="SM00130">
    <property type="entry name" value="KR"/>
    <property type="match status" value="4"/>
</dbReference>
<dbReference type="SMART" id="SM00473">
    <property type="entry name" value="PAN_AP"/>
    <property type="match status" value="1"/>
</dbReference>
<dbReference type="SMART" id="SM00020">
    <property type="entry name" value="Tryp_SPc"/>
    <property type="match status" value="1"/>
</dbReference>
<dbReference type="SUPFAM" id="SSF57414">
    <property type="entry name" value="Hairpin loop containing domain-like"/>
    <property type="match status" value="1"/>
</dbReference>
<dbReference type="SUPFAM" id="SSF57440">
    <property type="entry name" value="Kringle-like"/>
    <property type="match status" value="4"/>
</dbReference>
<dbReference type="SUPFAM" id="SSF50494">
    <property type="entry name" value="Trypsin-like serine proteases"/>
    <property type="match status" value="1"/>
</dbReference>
<dbReference type="PROSITE" id="PS00021">
    <property type="entry name" value="KRINGLE_1"/>
    <property type="match status" value="2"/>
</dbReference>
<dbReference type="PROSITE" id="PS50070">
    <property type="entry name" value="KRINGLE_2"/>
    <property type="match status" value="4"/>
</dbReference>
<dbReference type="PROSITE" id="PS50948">
    <property type="entry name" value="PAN"/>
    <property type="match status" value="1"/>
</dbReference>
<dbReference type="PROSITE" id="PS50240">
    <property type="entry name" value="TRYPSIN_DOM"/>
    <property type="match status" value="1"/>
</dbReference>
<feature type="signal peptide" evidence="2">
    <location>
        <begin position="1"/>
        <end position="20"/>
    </location>
</feature>
<feature type="chain" id="PRO_0000346153" description="Putative macrophage stimulating 1-like protein">
    <location>
        <begin position="21"/>
        <end position="715"/>
    </location>
</feature>
<feature type="domain" description="PAN" evidence="5">
    <location>
        <begin position="21"/>
        <end position="110"/>
    </location>
</feature>
<feature type="domain" description="Kringle 1" evidence="3">
    <location>
        <begin position="63"/>
        <end position="156"/>
    </location>
</feature>
<feature type="domain" description="Kringle 2" evidence="3">
    <location>
        <begin position="160"/>
        <end position="238"/>
    </location>
</feature>
<feature type="domain" description="Kringle 3" evidence="3">
    <location>
        <begin position="252"/>
        <end position="345"/>
    </location>
</feature>
<feature type="domain" description="Kringle 4" evidence="3">
    <location>
        <begin position="353"/>
        <end position="464"/>
    </location>
</feature>
<feature type="domain" description="Peptidase S1" evidence="4">
    <location>
        <begin position="488"/>
        <end position="713"/>
    </location>
</feature>
<feature type="disulfide bond" evidence="1">
    <location>
        <begin position="127"/>
        <end position="151"/>
    </location>
</feature>
<feature type="disulfide bond" evidence="1">
    <location>
        <begin position="161"/>
        <end position="238"/>
    </location>
</feature>
<feature type="disulfide bond" evidence="1">
    <location>
        <begin position="182"/>
        <end position="221"/>
    </location>
</feature>
<feature type="disulfide bond" evidence="1">
    <location>
        <begin position="210"/>
        <end position="233"/>
    </location>
</feature>
<feature type="disulfide bond" evidence="1">
    <location>
        <begin position="253"/>
        <end position="345"/>
    </location>
</feature>
<feature type="disulfide bond" evidence="1">
    <location>
        <begin position="316"/>
        <end position="339"/>
    </location>
</feature>
<feature type="disulfide bond" evidence="1">
    <location>
        <begin position="354"/>
        <end position="464"/>
    </location>
</feature>
<feature type="disulfide bond" evidence="1">
    <location>
        <begin position="375"/>
        <end position="447"/>
    </location>
</feature>
<feature type="disulfide bond" evidence="1">
    <location>
        <begin position="511"/>
        <end position="527"/>
    </location>
</feature>
<feature type="disulfide bond" evidence="1">
    <location>
        <begin position="606"/>
        <end position="671"/>
    </location>
</feature>
<feature type="disulfide bond" evidence="1">
    <location>
        <begin position="636"/>
        <end position="650"/>
    </location>
</feature>
<feature type="disulfide bond" evidence="1">
    <location>
        <begin position="661"/>
        <end position="689"/>
    </location>
</feature>
<feature type="splice variant" id="VSP_034980" description="In isoform 2." evidence="6">
    <location>
        <begin position="506"/>
        <end position="531"/>
    </location>
</feature>
<feature type="sequence conflict" description="In Ref. 1; AAP20103." evidence="7" ref="1">
    <original>T</original>
    <variation>A</variation>
    <location>
        <position position="690"/>
    </location>
</feature>
<sequence>MAPAPVTLLAPGAASSMSCSQPGQRSPSNDFQVLRGTELQHLLHAVVPGPWQEDVADAEECAGRCGPLMDCWAFHYNVSSHGCQLLPWTQHSPHSRLWHSGRCDLFQEKGEWGYMPTLRNGLEENFCRNPDGDPGGPWCHTTDPAVRFQSCSIKSCRVAACVWCNGEEYRGAVDRTESGRECQRWDLQHPHQHPFEPGKFLDQGLDDNYCRNPDGSERPWCYTTDPQIEREFCDLPRCGSEAQPRQEATSVSCFRGKGEGYRGTANTTTAAYLASVGTRKSHISTDLRQKNTRASEVGGGAGVGTCCCGDLRENFCWNLDGSEAPWCFTLRPGTRVGFCYQIRRCTDDVRPQDCYHGAGEQYRGTVSKTRKGVQCQRWSAETPHKLQALTLGRHALMSGTRAWKWLRLPCHDFAPAPASVHIYLRTACTTGGELLPDPDGDSHGPWCYTMDPRTPFDYCALRRCDQVQFEKCGKRVDRLDQRRSKLRVAGGHPGNSPWTVSLRNRQGQHFCAGSLVKEQWILTARQCFSSCHMPLTGYEVWLGTLFQNPQHGEPGLQRVPVAKMLCGPSGSQLVLLKLERSVTLNQRVALICLPPEWYVVPPGTKCEIAGWGETKGTGNDTVLNVALLNVISNQECNIKHRGHVRESEMCTEGLLAPVGACEGDYGGPLACFTHNCWVLKGIRIPNRVCTRSRWPAVFTRVSVFVDWIHKVMRLG</sequence>
<keyword id="KW-0025">Alternative splicing</keyword>
<keyword id="KW-1015">Disulfide bond</keyword>
<keyword id="KW-0378">Hydrolase</keyword>
<keyword id="KW-0420">Kringle</keyword>
<keyword id="KW-0645">Protease</keyword>
<keyword id="KW-1267">Proteomics identification</keyword>
<keyword id="KW-1185">Reference proteome</keyword>
<keyword id="KW-0677">Repeat</keyword>
<keyword id="KW-0964">Secreted</keyword>
<keyword id="KW-0721">Serine protease homolog</keyword>
<keyword id="KW-0732">Signal</keyword>
<proteinExistence type="evidence at protein level"/>
<comment type="subcellular location">
    <subcellularLocation>
        <location evidence="7">Secreted</location>
    </subcellularLocation>
</comment>
<comment type="alternative products">
    <event type="alternative splicing"/>
    <isoform>
        <id>Q2TV78-1</id>
        <name>1</name>
        <sequence type="displayed"/>
    </isoform>
    <isoform>
        <id>Q2TV78-2</id>
        <name>2</name>
        <sequence type="described" ref="VSP_034980"/>
    </isoform>
</comment>
<comment type="similarity">
    <text evidence="4">Belongs to the peptidase S1 family. Plasminogen subfamily.</text>
</comment>
<comment type="caution">
    <text evidence="7">Although it belongs to the peptidase S1 family, it lacks essential His, Asp, and Ser residues of the catalytic triad and is therefore predicted to lack peptidase activity.</text>
</comment>
<comment type="sequence caution" evidence="7">
    <conflict type="miscellaneous discrepancy">
        <sequence resource="EMBL-CDS" id="AAC35412"/>
    </conflict>
    <text>Unlikely isoform. Aberrant splice sites.</text>
</comment>
<name>MST1L_HUMAN</name>
<accession>Q2TV78</accession>
<accession>B7WPB1</accession>
<accession>Q13209</accession>